<gene>
    <name type="primary">yA</name>
    <name type="ORF">AN6635</name>
</gene>
<organism>
    <name type="scientific">Emericella nidulans (strain FGSC A4 / ATCC 38163 / CBS 112.46 / NRRL 194 / M139)</name>
    <name type="common">Aspergillus nidulans</name>
    <dbReference type="NCBI Taxonomy" id="227321"/>
    <lineage>
        <taxon>Eukaryota</taxon>
        <taxon>Fungi</taxon>
        <taxon>Dikarya</taxon>
        <taxon>Ascomycota</taxon>
        <taxon>Pezizomycotina</taxon>
        <taxon>Eurotiomycetes</taxon>
        <taxon>Eurotiomycetidae</taxon>
        <taxon>Eurotiales</taxon>
        <taxon>Aspergillaceae</taxon>
        <taxon>Aspergillus</taxon>
        <taxon>Aspergillus subgen. Nidulantes</taxon>
    </lineage>
</organism>
<proteinExistence type="evidence at transcript level"/>
<sequence>MYLSTVLFPLLALNLGLSHARFVRETLELTWEYGSPNGGTPREMVFTNGEYPGPDLIFDEDDDVEVLVINNLPFNTTVHWHGLEMRETPEADGVPGLTQTPIEPGATFTYRFRAYPAGTFWYHSHYKGLMQDGQVGAMYIRRKPDALRPYAVITEDPRELAEIQYAEDNPYLMLATDWTYLTSAEYHNIEVESGYNVFCVDSLLINGRGSVYCPGYQYLEEVSDDGLTAVLEGTHLTEKGCLQPDLHNVQGDYGPWNLSAVPTEVVFNCTPSSVEPPVIYVDPEFNGWVSLNFIGGAAQKAITFSVDNHPMWVYEVDGQFVEPREVEMVGVYSGARYAVMIKLDQTPGDYAIRIAVNGGDQVMSVYAILSYVNQDWIHRENVPKAAIGPHTDTVGYMNYGGGNTSADVRQLLFTENLPAFGVPPPPPSSEVSTTLRTGMIRVNNSYSWSLGNNVLYEPEMTSSTPLLFEPDPLAVIAPKYALTTENNTWVDIVLEITADPRDLIHPPHPIHKHGNRAYIIGNGVGKFRWENVSAAEAEVPDLFYVNETAALRDTFVTDFFDSRLMDGAWIVIRYFVQDKFPSILHCHIASHQMGGMALALLDGVDVWDS</sequence>
<protein>
    <recommendedName>
        <fullName>Laccase-1</fullName>
        <ecNumber evidence="2">1.10.3.2</ecNumber>
    </recommendedName>
    <alternativeName>
        <fullName>Benzenediol:oxygen oxidoreductase 1</fullName>
    </alternativeName>
    <alternativeName>
        <fullName>Conidial laccase</fullName>
    </alternativeName>
    <alternativeName>
        <fullName>Diphenol oxidase 1</fullName>
    </alternativeName>
    <alternativeName>
        <fullName>Laccase I</fullName>
    </alternativeName>
    <alternativeName>
        <fullName>Urishiol oxidase 1</fullName>
    </alternativeName>
</protein>
<accession>P17489</accession>
<accession>C8V1C0</accession>
<accession>Q5AYJ5</accession>
<dbReference type="EC" id="1.10.3.2" evidence="2"/>
<dbReference type="EMBL" id="X52552">
    <property type="protein sequence ID" value="CAA36787.1"/>
    <property type="molecule type" value="Genomic_DNA"/>
</dbReference>
<dbReference type="EMBL" id="AACD01000110">
    <property type="protein sequence ID" value="EAA58164.1"/>
    <property type="molecule type" value="Genomic_DNA"/>
</dbReference>
<dbReference type="EMBL" id="BN001301">
    <property type="protein sequence ID" value="CBF71142.1"/>
    <property type="molecule type" value="Genomic_DNA"/>
</dbReference>
<dbReference type="PIR" id="S10149">
    <property type="entry name" value="KSASL1"/>
</dbReference>
<dbReference type="RefSeq" id="XP_664239.1">
    <property type="nucleotide sequence ID" value="XM_659147.1"/>
</dbReference>
<dbReference type="SMR" id="P17489"/>
<dbReference type="STRING" id="227321.P17489"/>
<dbReference type="GlyCosmos" id="P17489">
    <property type="glycosylation" value="7 sites, No reported glycans"/>
</dbReference>
<dbReference type="EnsemblFungi" id="CBF71142">
    <property type="protein sequence ID" value="CBF71142"/>
    <property type="gene ID" value="ANIA_06635"/>
</dbReference>
<dbReference type="GeneID" id="2870381"/>
<dbReference type="KEGG" id="ani:ANIA_06635"/>
<dbReference type="VEuPathDB" id="FungiDB:AN6635"/>
<dbReference type="eggNOG" id="KOG1263">
    <property type="taxonomic scope" value="Eukaryota"/>
</dbReference>
<dbReference type="HOGENOM" id="CLU_006504_5_0_1"/>
<dbReference type="InParanoid" id="P17489"/>
<dbReference type="OMA" id="SLLHCHI"/>
<dbReference type="OrthoDB" id="2121828at2759"/>
<dbReference type="Proteomes" id="UP000000560">
    <property type="component" value="Chromosome I"/>
</dbReference>
<dbReference type="GO" id="GO:0005576">
    <property type="term" value="C:extracellular region"/>
    <property type="evidence" value="ECO:0007669"/>
    <property type="project" value="UniProtKB-SubCell"/>
</dbReference>
<dbReference type="GO" id="GO:0005507">
    <property type="term" value="F:copper ion binding"/>
    <property type="evidence" value="ECO:0007669"/>
    <property type="project" value="InterPro"/>
</dbReference>
<dbReference type="GO" id="GO:0052716">
    <property type="term" value="F:hydroquinone:oxygen oxidoreductase activity"/>
    <property type="evidence" value="ECO:0000314"/>
    <property type="project" value="AspGD"/>
</dbReference>
<dbReference type="GO" id="GO:0016491">
    <property type="term" value="F:oxidoreductase activity"/>
    <property type="evidence" value="ECO:0000318"/>
    <property type="project" value="GO_Central"/>
</dbReference>
<dbReference type="GO" id="GO:0048315">
    <property type="term" value="P:conidium formation"/>
    <property type="evidence" value="ECO:0000315"/>
    <property type="project" value="AspGD"/>
</dbReference>
<dbReference type="GO" id="GO:0043324">
    <property type="term" value="P:pigment metabolic process involved in developmental pigmentation"/>
    <property type="evidence" value="ECO:0000315"/>
    <property type="project" value="AspGD"/>
</dbReference>
<dbReference type="GO" id="GO:0030435">
    <property type="term" value="P:sporulation resulting in formation of a cellular spore"/>
    <property type="evidence" value="ECO:0007669"/>
    <property type="project" value="UniProtKB-KW"/>
</dbReference>
<dbReference type="CDD" id="cd13850">
    <property type="entry name" value="CuRO_1_Abr2_like"/>
    <property type="match status" value="1"/>
</dbReference>
<dbReference type="CDD" id="cd13876">
    <property type="entry name" value="CuRO_2_Abr2_like"/>
    <property type="match status" value="1"/>
</dbReference>
<dbReference type="CDD" id="cd13898">
    <property type="entry name" value="CuRO_3_Abr2_like"/>
    <property type="match status" value="1"/>
</dbReference>
<dbReference type="FunFam" id="2.60.40.420:FF:000036">
    <property type="entry name" value="L-ascorbate oxidase"/>
    <property type="match status" value="1"/>
</dbReference>
<dbReference type="Gene3D" id="2.60.40.420">
    <property type="entry name" value="Cupredoxins - blue copper proteins"/>
    <property type="match status" value="3"/>
</dbReference>
<dbReference type="InterPro" id="IPR011707">
    <property type="entry name" value="Cu-oxidase-like_N"/>
</dbReference>
<dbReference type="InterPro" id="IPR001117">
    <property type="entry name" value="Cu-oxidase_2nd"/>
</dbReference>
<dbReference type="InterPro" id="IPR011706">
    <property type="entry name" value="Cu-oxidase_C"/>
</dbReference>
<dbReference type="InterPro" id="IPR045087">
    <property type="entry name" value="Cu-oxidase_fam"/>
</dbReference>
<dbReference type="InterPro" id="IPR002355">
    <property type="entry name" value="Cu_oxidase_Cu_BS"/>
</dbReference>
<dbReference type="InterPro" id="IPR008972">
    <property type="entry name" value="Cupredoxin"/>
</dbReference>
<dbReference type="PANTHER" id="PTHR11709:SF488">
    <property type="entry name" value="LACCASE-RELATED"/>
    <property type="match status" value="1"/>
</dbReference>
<dbReference type="PANTHER" id="PTHR11709">
    <property type="entry name" value="MULTI-COPPER OXIDASE"/>
    <property type="match status" value="1"/>
</dbReference>
<dbReference type="Pfam" id="PF00394">
    <property type="entry name" value="Cu-oxidase"/>
    <property type="match status" value="1"/>
</dbReference>
<dbReference type="Pfam" id="PF07731">
    <property type="entry name" value="Cu-oxidase_2"/>
    <property type="match status" value="1"/>
</dbReference>
<dbReference type="Pfam" id="PF07732">
    <property type="entry name" value="Cu-oxidase_3"/>
    <property type="match status" value="1"/>
</dbReference>
<dbReference type="SUPFAM" id="SSF49503">
    <property type="entry name" value="Cupredoxins"/>
    <property type="match status" value="3"/>
</dbReference>
<dbReference type="PROSITE" id="PS00080">
    <property type="entry name" value="MULTICOPPER_OXIDASE2"/>
    <property type="match status" value="1"/>
</dbReference>
<reference key="1">
    <citation type="journal article" date="1990" name="Nucleic Acids Res.">
        <title>Sequence and molecular structure of the Aspergillus nidulans yA (laccase I) gene.</title>
        <authorList>
            <person name="Aramayo R."/>
            <person name="Timberlake W.E."/>
        </authorList>
    </citation>
    <scope>NUCLEOTIDE SEQUENCE [GENOMIC DNA]</scope>
    <source>
        <strain>FGSC A4 / ATCC 38163 / CBS 112.46 / NRRL 194 / M139</strain>
        <strain>Winter</strain>
    </source>
</reference>
<reference key="2">
    <citation type="journal article" date="2005" name="Nature">
        <title>Sequencing of Aspergillus nidulans and comparative analysis with A. fumigatus and A. oryzae.</title>
        <authorList>
            <person name="Galagan J.E."/>
            <person name="Calvo S.E."/>
            <person name="Cuomo C."/>
            <person name="Ma L.-J."/>
            <person name="Wortman J.R."/>
            <person name="Batzoglou S."/>
            <person name="Lee S.-I."/>
            <person name="Bastuerkmen M."/>
            <person name="Spevak C.C."/>
            <person name="Clutterbuck J."/>
            <person name="Kapitonov V."/>
            <person name="Jurka J."/>
            <person name="Scazzocchio C."/>
            <person name="Farman M.L."/>
            <person name="Butler J."/>
            <person name="Purcell S."/>
            <person name="Harris S."/>
            <person name="Braus G.H."/>
            <person name="Draht O."/>
            <person name="Busch S."/>
            <person name="D'Enfert C."/>
            <person name="Bouchier C."/>
            <person name="Goldman G.H."/>
            <person name="Bell-Pedersen D."/>
            <person name="Griffiths-Jones S."/>
            <person name="Doonan J.H."/>
            <person name="Yu J."/>
            <person name="Vienken K."/>
            <person name="Pain A."/>
            <person name="Freitag M."/>
            <person name="Selker E.U."/>
            <person name="Archer D.B."/>
            <person name="Penalva M.A."/>
            <person name="Oakley B.R."/>
            <person name="Momany M."/>
            <person name="Tanaka T."/>
            <person name="Kumagai T."/>
            <person name="Asai K."/>
            <person name="Machida M."/>
            <person name="Nierman W.C."/>
            <person name="Denning D.W."/>
            <person name="Caddick M.X."/>
            <person name="Hynes M."/>
            <person name="Paoletti M."/>
            <person name="Fischer R."/>
            <person name="Miller B.L."/>
            <person name="Dyer P.S."/>
            <person name="Sachs M.S."/>
            <person name="Osmani S.A."/>
            <person name="Birren B.W."/>
        </authorList>
    </citation>
    <scope>NUCLEOTIDE SEQUENCE [LARGE SCALE GENOMIC DNA]</scope>
    <source>
        <strain>FGSC A4 / ATCC 38163 / CBS 112.46 / NRRL 194 / M139</strain>
    </source>
</reference>
<reference key="3">
    <citation type="journal article" date="2009" name="Fungal Genet. Biol.">
        <title>The 2008 update of the Aspergillus nidulans genome annotation: a community effort.</title>
        <authorList>
            <person name="Wortman J.R."/>
            <person name="Gilsenan J.M."/>
            <person name="Joardar V."/>
            <person name="Deegan J."/>
            <person name="Clutterbuck J."/>
            <person name="Andersen M.R."/>
            <person name="Archer D."/>
            <person name="Bencina M."/>
            <person name="Braus G."/>
            <person name="Coutinho P."/>
            <person name="von Dohren H."/>
            <person name="Doonan J."/>
            <person name="Driessen A.J."/>
            <person name="Durek P."/>
            <person name="Espeso E."/>
            <person name="Fekete E."/>
            <person name="Flipphi M."/>
            <person name="Estrada C.G."/>
            <person name="Geysens S."/>
            <person name="Goldman G."/>
            <person name="de Groot P.W."/>
            <person name="Hansen K."/>
            <person name="Harris S.D."/>
            <person name="Heinekamp T."/>
            <person name="Helmstaedt K."/>
            <person name="Henrissat B."/>
            <person name="Hofmann G."/>
            <person name="Homan T."/>
            <person name="Horio T."/>
            <person name="Horiuchi H."/>
            <person name="James S."/>
            <person name="Jones M."/>
            <person name="Karaffa L."/>
            <person name="Karanyi Z."/>
            <person name="Kato M."/>
            <person name="Keller N."/>
            <person name="Kelly D.E."/>
            <person name="Kiel J.A."/>
            <person name="Kim J.M."/>
            <person name="van der Klei I.J."/>
            <person name="Klis F.M."/>
            <person name="Kovalchuk A."/>
            <person name="Krasevec N."/>
            <person name="Kubicek C.P."/>
            <person name="Liu B."/>
            <person name="Maccabe A."/>
            <person name="Meyer V."/>
            <person name="Mirabito P."/>
            <person name="Miskei M."/>
            <person name="Mos M."/>
            <person name="Mullins J."/>
            <person name="Nelson D.R."/>
            <person name="Nielsen J."/>
            <person name="Oakley B.R."/>
            <person name="Osmani S.A."/>
            <person name="Pakula T."/>
            <person name="Paszewski A."/>
            <person name="Paulsen I."/>
            <person name="Pilsyk S."/>
            <person name="Pocsi I."/>
            <person name="Punt P.J."/>
            <person name="Ram A.F."/>
            <person name="Ren Q."/>
            <person name="Robellet X."/>
            <person name="Robson G."/>
            <person name="Seiboth B."/>
            <person name="van Solingen P."/>
            <person name="Specht T."/>
            <person name="Sun J."/>
            <person name="Taheri-Talesh N."/>
            <person name="Takeshita N."/>
            <person name="Ussery D."/>
            <person name="vanKuyk P.A."/>
            <person name="Visser H."/>
            <person name="van de Vondervoort P.J."/>
            <person name="de Vries R.P."/>
            <person name="Walton J."/>
            <person name="Xiang X."/>
            <person name="Xiong Y."/>
            <person name="Zeng A.P."/>
            <person name="Brandt B.W."/>
            <person name="Cornell M.J."/>
            <person name="van den Hondel C.A."/>
            <person name="Visser J."/>
            <person name="Oliver S.G."/>
            <person name="Turner G."/>
        </authorList>
    </citation>
    <scope>GENOME REANNOTATION</scope>
    <source>
        <strain>FGSC A4 / ATCC 38163 / CBS 112.46 / NRRL 194 / M139</strain>
    </source>
</reference>
<reference key="4">
    <citation type="journal article" date="1989" name="Genetics">
        <title>Molecular characterization of the Aspergillus nidulans yA locus.</title>
        <authorList>
            <person name="O'Hara E.B."/>
            <person name="Timberlake W.E."/>
        </authorList>
    </citation>
    <scope>FUNCTION</scope>
    <scope>DEVELOPMENTAL STAGE</scope>
</reference>
<keyword id="KW-0183">Conidiation</keyword>
<keyword id="KW-0186">Copper</keyword>
<keyword id="KW-0325">Glycoprotein</keyword>
<keyword id="KW-0479">Metal-binding</keyword>
<keyword id="KW-0560">Oxidoreductase</keyword>
<keyword id="KW-1185">Reference proteome</keyword>
<keyword id="KW-0677">Repeat</keyword>
<keyword id="KW-0964">Secreted</keyword>
<keyword id="KW-0732">Signal</keyword>
<keyword id="KW-0749">Sporulation</keyword>
<name>LAC1_EMENI</name>
<feature type="signal peptide" evidence="3">
    <location>
        <begin position="1"/>
        <end position="20"/>
    </location>
</feature>
<feature type="chain" id="PRO_0000002927" description="Laccase-1">
    <location>
        <begin position="21"/>
        <end position="609"/>
    </location>
</feature>
<feature type="domain" description="Plastocyanin-like 1">
    <location>
        <begin position="45"/>
        <end position="141"/>
    </location>
</feature>
<feature type="domain" description="Plastocyanin-like 2">
    <location>
        <begin position="270"/>
        <end position="372"/>
    </location>
</feature>
<feature type="domain" description="Plastocyanin-like 3">
    <location>
        <begin position="463"/>
        <end position="602"/>
    </location>
</feature>
<feature type="binding site" description="type 2 copper site" evidence="1">
    <location>
        <position position="79"/>
    </location>
    <ligand>
        <name>Cu cation</name>
        <dbReference type="ChEBI" id="CHEBI:23378"/>
        <label>1</label>
    </ligand>
</feature>
<feature type="binding site" description="type 3 copper site" evidence="1">
    <location>
        <position position="81"/>
    </location>
    <ligand>
        <name>Cu cation</name>
        <dbReference type="ChEBI" id="CHEBI:23378"/>
        <label>2</label>
    </ligand>
</feature>
<feature type="binding site" description="type 3 copper site" evidence="1">
    <location>
        <position position="123"/>
    </location>
    <ligand>
        <name>Cu cation</name>
        <dbReference type="ChEBI" id="CHEBI:23378"/>
        <label>2</label>
    </ligand>
</feature>
<feature type="binding site" description="type 3 copper site" evidence="1">
    <location>
        <position position="125"/>
    </location>
    <ligand>
        <name>Cu cation</name>
        <dbReference type="ChEBI" id="CHEBI:23378"/>
        <label>3</label>
    </ligand>
</feature>
<feature type="binding site" description="type 1 copper site" evidence="1">
    <location>
        <position position="508"/>
    </location>
    <ligand>
        <name>Cu cation</name>
        <dbReference type="ChEBI" id="CHEBI:23378"/>
        <label>4</label>
    </ligand>
</feature>
<feature type="binding site" description="type 2 copper site" evidence="1">
    <location>
        <position position="511"/>
    </location>
    <ligand>
        <name>Cu cation</name>
        <dbReference type="ChEBI" id="CHEBI:23378"/>
        <label>1</label>
    </ligand>
</feature>
<feature type="binding site" description="type 3 copper site" evidence="1">
    <location>
        <position position="513"/>
    </location>
    <ligand>
        <name>Cu cation</name>
        <dbReference type="ChEBI" id="CHEBI:23378"/>
        <label>3</label>
    </ligand>
</feature>
<feature type="binding site" description="type 3 copper site" evidence="1">
    <location>
        <position position="585"/>
    </location>
    <ligand>
        <name>Cu cation</name>
        <dbReference type="ChEBI" id="CHEBI:23378"/>
        <label>3</label>
    </ligand>
</feature>
<feature type="binding site" description="type 1 copper site" evidence="1">
    <location>
        <position position="586"/>
    </location>
    <ligand>
        <name>Cu cation</name>
        <dbReference type="ChEBI" id="CHEBI:23378"/>
        <label>4</label>
    </ligand>
</feature>
<feature type="binding site" description="type 3 copper site" evidence="1">
    <location>
        <position position="587"/>
    </location>
    <ligand>
        <name>Cu cation</name>
        <dbReference type="ChEBI" id="CHEBI:23378"/>
        <label>2</label>
    </ligand>
</feature>
<feature type="binding site" description="type 1 copper site" evidence="1">
    <location>
        <position position="591"/>
    </location>
    <ligand>
        <name>Cu cation</name>
        <dbReference type="ChEBI" id="CHEBI:23378"/>
        <label>4</label>
    </ligand>
</feature>
<feature type="glycosylation site" description="N-linked (GlcNAc...) asparagine" evidence="3">
    <location>
        <position position="75"/>
    </location>
</feature>
<feature type="glycosylation site" description="N-linked (GlcNAc...) asparagine" evidence="3">
    <location>
        <position position="257"/>
    </location>
</feature>
<feature type="glycosylation site" description="N-linked (GlcNAc...) asparagine" evidence="3">
    <location>
        <position position="403"/>
    </location>
</feature>
<feature type="glycosylation site" description="N-linked (GlcNAc...) asparagine" evidence="3">
    <location>
        <position position="443"/>
    </location>
</feature>
<feature type="glycosylation site" description="N-linked (GlcNAc...) asparagine" evidence="3">
    <location>
        <position position="486"/>
    </location>
</feature>
<feature type="glycosylation site" description="N-linked (GlcNAc...) asparagine" evidence="3">
    <location>
        <position position="531"/>
    </location>
</feature>
<feature type="glycosylation site" description="N-linked (GlcNAc...) asparagine" evidence="3">
    <location>
        <position position="546"/>
    </location>
</feature>
<feature type="sequence conflict" description="In Ref. 1; CAA36787." evidence="5" ref="1">
    <original>DGLTA</original>
    <variation>TALLS</variation>
    <location>
        <begin position="225"/>
        <end position="229"/>
    </location>
</feature>
<feature type="sequence conflict" description="In Ref. 1; CAA36787." evidence="5" ref="1">
    <original>G</original>
    <variation>A</variation>
    <location>
        <position position="359"/>
    </location>
</feature>
<feature type="sequence conflict" description="In Ref. 1; CAA36787." evidence="5" ref="1">
    <original>G</original>
    <variation>A</variation>
    <location>
        <position position="421"/>
    </location>
</feature>
<evidence type="ECO:0000250" key="1">
    <source>
        <dbReference type="UniProtKB" id="D0VWU3"/>
    </source>
</evidence>
<evidence type="ECO:0000250" key="2">
    <source>
        <dbReference type="UniProtKB" id="Q70KY3"/>
    </source>
</evidence>
<evidence type="ECO:0000255" key="3"/>
<evidence type="ECO:0000269" key="4">
    <source>
    </source>
</evidence>
<evidence type="ECO:0000305" key="5"/>
<comment type="function">
    <text evidence="4">Required for the conversion of the yellow polyketide pigment synthesized by wA to the conidial green pigment.</text>
</comment>
<comment type="catalytic activity">
    <reaction evidence="2">
        <text>4 hydroquinone + O2 = 4 benzosemiquinone + 2 H2O</text>
        <dbReference type="Rhea" id="RHEA:11276"/>
        <dbReference type="ChEBI" id="CHEBI:15377"/>
        <dbReference type="ChEBI" id="CHEBI:15379"/>
        <dbReference type="ChEBI" id="CHEBI:17594"/>
        <dbReference type="ChEBI" id="CHEBI:17977"/>
        <dbReference type="EC" id="1.10.3.2"/>
    </reaction>
</comment>
<comment type="cofactor">
    <cofactor evidence="2">
        <name>Cu cation</name>
        <dbReference type="ChEBI" id="CHEBI:23378"/>
    </cofactor>
    <text evidence="2">Binds 4 Cu cations per monomer.</text>
</comment>
<comment type="subcellular location">
    <subcellularLocation>
        <location evidence="2">Secreted</location>
    </subcellularLocation>
</comment>
<comment type="developmental stage">
    <text evidence="4">Specifically expressed late during asexual development.</text>
</comment>
<comment type="similarity">
    <text evidence="5">Belongs to the multicopper oxidase family.</text>
</comment>